<name>DNLJ2_DEIDV</name>
<feature type="chain" id="PRO_0000380358" description="DNA ligase 2">
    <location>
        <begin position="1"/>
        <end position="686"/>
    </location>
</feature>
<feature type="domain" description="BRCT" evidence="1">
    <location>
        <begin position="593"/>
        <end position="681"/>
    </location>
</feature>
<feature type="active site" description="N6-AMP-lysine intermediate" evidence="1">
    <location>
        <position position="123"/>
    </location>
</feature>
<feature type="binding site" evidence="1">
    <location>
        <begin position="37"/>
        <end position="41"/>
    </location>
    <ligand>
        <name>NAD(+)</name>
        <dbReference type="ChEBI" id="CHEBI:57540"/>
    </ligand>
</feature>
<feature type="binding site" evidence="1">
    <location>
        <begin position="86"/>
        <end position="87"/>
    </location>
    <ligand>
        <name>NAD(+)</name>
        <dbReference type="ChEBI" id="CHEBI:57540"/>
    </ligand>
</feature>
<feature type="binding site" evidence="1">
    <location>
        <position position="121"/>
    </location>
    <ligand>
        <name>NAD(+)</name>
        <dbReference type="ChEBI" id="CHEBI:57540"/>
    </ligand>
</feature>
<feature type="binding site" evidence="1">
    <location>
        <position position="144"/>
    </location>
    <ligand>
        <name>NAD(+)</name>
        <dbReference type="ChEBI" id="CHEBI:57540"/>
    </ligand>
</feature>
<feature type="binding site" evidence="1">
    <location>
        <position position="179"/>
    </location>
    <ligand>
        <name>NAD(+)</name>
        <dbReference type="ChEBI" id="CHEBI:57540"/>
    </ligand>
</feature>
<feature type="binding site" evidence="1">
    <location>
        <position position="295"/>
    </location>
    <ligand>
        <name>NAD(+)</name>
        <dbReference type="ChEBI" id="CHEBI:57540"/>
    </ligand>
</feature>
<feature type="binding site" evidence="1">
    <location>
        <position position="319"/>
    </location>
    <ligand>
        <name>NAD(+)</name>
        <dbReference type="ChEBI" id="CHEBI:57540"/>
    </ligand>
</feature>
<feature type="binding site" evidence="1">
    <location>
        <position position="413"/>
    </location>
    <ligand>
        <name>Zn(2+)</name>
        <dbReference type="ChEBI" id="CHEBI:29105"/>
    </ligand>
</feature>
<feature type="binding site" evidence="1">
    <location>
        <position position="416"/>
    </location>
    <ligand>
        <name>Zn(2+)</name>
        <dbReference type="ChEBI" id="CHEBI:29105"/>
    </ligand>
</feature>
<feature type="binding site" evidence="1">
    <location>
        <position position="431"/>
    </location>
    <ligand>
        <name>Zn(2+)</name>
        <dbReference type="ChEBI" id="CHEBI:29105"/>
    </ligand>
</feature>
<feature type="binding site" evidence="1">
    <location>
        <position position="436"/>
    </location>
    <ligand>
        <name>Zn(2+)</name>
        <dbReference type="ChEBI" id="CHEBI:29105"/>
    </ligand>
</feature>
<dbReference type="EC" id="6.5.1.2" evidence="1"/>
<dbReference type="EMBL" id="CP001114">
    <property type="protein sequence ID" value="ACO46144.1"/>
    <property type="molecule type" value="Genomic_DNA"/>
</dbReference>
<dbReference type="RefSeq" id="WP_012693267.1">
    <property type="nucleotide sequence ID" value="NC_012526.1"/>
</dbReference>
<dbReference type="SMR" id="C1CVC7"/>
<dbReference type="STRING" id="546414.Deide_12290"/>
<dbReference type="PaxDb" id="546414-Deide_12290"/>
<dbReference type="KEGG" id="ddr:Deide_12290"/>
<dbReference type="eggNOG" id="COG0272">
    <property type="taxonomic scope" value="Bacteria"/>
</dbReference>
<dbReference type="HOGENOM" id="CLU_007764_2_1_0"/>
<dbReference type="OrthoDB" id="9759736at2"/>
<dbReference type="Proteomes" id="UP000002208">
    <property type="component" value="Chromosome"/>
</dbReference>
<dbReference type="GO" id="GO:0005829">
    <property type="term" value="C:cytosol"/>
    <property type="evidence" value="ECO:0007669"/>
    <property type="project" value="TreeGrafter"/>
</dbReference>
<dbReference type="GO" id="GO:0003911">
    <property type="term" value="F:DNA ligase (NAD+) activity"/>
    <property type="evidence" value="ECO:0007669"/>
    <property type="project" value="UniProtKB-UniRule"/>
</dbReference>
<dbReference type="GO" id="GO:0046872">
    <property type="term" value="F:metal ion binding"/>
    <property type="evidence" value="ECO:0007669"/>
    <property type="project" value="UniProtKB-KW"/>
</dbReference>
<dbReference type="GO" id="GO:0006281">
    <property type="term" value="P:DNA repair"/>
    <property type="evidence" value="ECO:0007669"/>
    <property type="project" value="UniProtKB-KW"/>
</dbReference>
<dbReference type="GO" id="GO:0006260">
    <property type="term" value="P:DNA replication"/>
    <property type="evidence" value="ECO:0007669"/>
    <property type="project" value="UniProtKB-KW"/>
</dbReference>
<dbReference type="CDD" id="cd17748">
    <property type="entry name" value="BRCT_DNA_ligase_like"/>
    <property type="match status" value="1"/>
</dbReference>
<dbReference type="CDD" id="cd00114">
    <property type="entry name" value="LIGANc"/>
    <property type="match status" value="1"/>
</dbReference>
<dbReference type="FunFam" id="1.10.150.20:FF:000007">
    <property type="entry name" value="DNA ligase"/>
    <property type="match status" value="1"/>
</dbReference>
<dbReference type="Gene3D" id="6.20.10.30">
    <property type="match status" value="1"/>
</dbReference>
<dbReference type="Gene3D" id="1.10.150.20">
    <property type="entry name" value="5' to 3' exonuclease, C-terminal subdomain"/>
    <property type="match status" value="2"/>
</dbReference>
<dbReference type="Gene3D" id="3.40.50.10190">
    <property type="entry name" value="BRCT domain"/>
    <property type="match status" value="1"/>
</dbReference>
<dbReference type="Gene3D" id="3.30.470.30">
    <property type="entry name" value="DNA ligase/mRNA capping enzyme"/>
    <property type="match status" value="1"/>
</dbReference>
<dbReference type="Gene3D" id="1.10.287.610">
    <property type="entry name" value="Helix hairpin bin"/>
    <property type="match status" value="1"/>
</dbReference>
<dbReference type="Gene3D" id="2.40.50.140">
    <property type="entry name" value="Nucleic acid-binding proteins"/>
    <property type="match status" value="1"/>
</dbReference>
<dbReference type="HAMAP" id="MF_01588">
    <property type="entry name" value="DNA_ligase_A"/>
    <property type="match status" value="1"/>
</dbReference>
<dbReference type="InterPro" id="IPR001357">
    <property type="entry name" value="BRCT_dom"/>
</dbReference>
<dbReference type="InterPro" id="IPR036420">
    <property type="entry name" value="BRCT_dom_sf"/>
</dbReference>
<dbReference type="InterPro" id="IPR041663">
    <property type="entry name" value="DisA/LigA_HHH"/>
</dbReference>
<dbReference type="InterPro" id="IPR001679">
    <property type="entry name" value="DNA_ligase"/>
</dbReference>
<dbReference type="InterPro" id="IPR013839">
    <property type="entry name" value="DNAligase_adenylation"/>
</dbReference>
<dbReference type="InterPro" id="IPR013840">
    <property type="entry name" value="DNAligase_N"/>
</dbReference>
<dbReference type="InterPro" id="IPR012340">
    <property type="entry name" value="NA-bd_OB-fold"/>
</dbReference>
<dbReference type="InterPro" id="IPR004150">
    <property type="entry name" value="NAD_DNA_ligase_OB"/>
</dbReference>
<dbReference type="InterPro" id="IPR010994">
    <property type="entry name" value="RuvA_2-like"/>
</dbReference>
<dbReference type="InterPro" id="IPR004149">
    <property type="entry name" value="Znf_DNAligase_C4"/>
</dbReference>
<dbReference type="NCBIfam" id="TIGR00575">
    <property type="entry name" value="dnlj"/>
    <property type="match status" value="1"/>
</dbReference>
<dbReference type="NCBIfam" id="NF005932">
    <property type="entry name" value="PRK07956.1"/>
    <property type="match status" value="1"/>
</dbReference>
<dbReference type="PANTHER" id="PTHR23389">
    <property type="entry name" value="CHROMOSOME TRANSMISSION FIDELITY FACTOR 18"/>
    <property type="match status" value="1"/>
</dbReference>
<dbReference type="PANTHER" id="PTHR23389:SF9">
    <property type="entry name" value="DNA LIGASE"/>
    <property type="match status" value="1"/>
</dbReference>
<dbReference type="Pfam" id="PF00533">
    <property type="entry name" value="BRCT"/>
    <property type="match status" value="1"/>
</dbReference>
<dbReference type="Pfam" id="PF01653">
    <property type="entry name" value="DNA_ligase_aden"/>
    <property type="match status" value="1"/>
</dbReference>
<dbReference type="Pfam" id="PF03120">
    <property type="entry name" value="DNA_ligase_OB"/>
    <property type="match status" value="1"/>
</dbReference>
<dbReference type="Pfam" id="PF03119">
    <property type="entry name" value="DNA_ligase_ZBD"/>
    <property type="match status" value="1"/>
</dbReference>
<dbReference type="Pfam" id="PF12826">
    <property type="entry name" value="HHH_2"/>
    <property type="match status" value="1"/>
</dbReference>
<dbReference type="Pfam" id="PF14520">
    <property type="entry name" value="HHH_5"/>
    <property type="match status" value="1"/>
</dbReference>
<dbReference type="Pfam" id="PF22745">
    <property type="entry name" value="Nlig-Ia"/>
    <property type="match status" value="1"/>
</dbReference>
<dbReference type="PIRSF" id="PIRSF001604">
    <property type="entry name" value="LigA"/>
    <property type="match status" value="1"/>
</dbReference>
<dbReference type="SMART" id="SM00292">
    <property type="entry name" value="BRCT"/>
    <property type="match status" value="1"/>
</dbReference>
<dbReference type="SMART" id="SM00532">
    <property type="entry name" value="LIGANc"/>
    <property type="match status" value="1"/>
</dbReference>
<dbReference type="SUPFAM" id="SSF52113">
    <property type="entry name" value="BRCT domain"/>
    <property type="match status" value="1"/>
</dbReference>
<dbReference type="SUPFAM" id="SSF56091">
    <property type="entry name" value="DNA ligase/mRNA capping enzyme, catalytic domain"/>
    <property type="match status" value="1"/>
</dbReference>
<dbReference type="SUPFAM" id="SSF50249">
    <property type="entry name" value="Nucleic acid-binding proteins"/>
    <property type="match status" value="1"/>
</dbReference>
<dbReference type="SUPFAM" id="SSF47781">
    <property type="entry name" value="RuvA domain 2-like"/>
    <property type="match status" value="1"/>
</dbReference>
<dbReference type="PROSITE" id="PS50172">
    <property type="entry name" value="BRCT"/>
    <property type="match status" value="1"/>
</dbReference>
<gene>
    <name evidence="1" type="primary">ligA2</name>
    <name type="ordered locus">Deide_12290</name>
</gene>
<sequence length="686" mass="74984">MDQAASPDDHARYLALRAEVARHNRAYYEQDAPEISDDEYDALARALRDMEARHPEWVEDDSPVQTIGGAPSAAFEPVAHLTPMTSLDNVFDADELREWQEKLARSLNLPPESDDFTFTGEIKIDGLSVNLYYLDGTLQWAATRGNGRVGEMVTAQVLTIPGIPQHLDGLKGQLEVRGEVYLSRADFAAFNAQAEELGTPLLKNPRNGAAGALRQKDPEVTRTRNLKAIFYSLGRRDGVEARTQSEVLQWLAGRGFPVSHYSETFRGYVAAADYHRRMTEARSNFEFDADGTVIKLDPLALQEEAGFTSRAPRWAIAFKFPVEQVETVLESITVNVGRTGKLAPLAHLAPRLIEGSTVSKATLHNEDYIRQMDLRVGDTVVVRKSGGVIPQIMRVVTEKRPEKTTPFVFPTYCPECGHEVTRAEGDANTYCPNPACPAQRFERIRYFVSRGAMDVRGIGEKLVIQVIETGLVRDAADLYLLTAEQLAGLERGGEKKAQNVLAQLEASKTRPLWRLINALGMTHVGERNAQALARAFGSLDALLRATPEQIEAVPGMGKVTAVSVSAALADPTMRNLIERLRAAGMSPEETQTVRGEQLAGLNFVITGSLSQPRDELKALLEAAGARVTGSVTRKTSYLIAGQDAGSKLDRARELAVPVLDEAALGTLLHQRGVQLPGVQASAASTV</sequence>
<reference key="1">
    <citation type="journal article" date="2009" name="PLoS Genet.">
        <title>Alliance of proteomics and genomics to unravel the specificities of Sahara bacterium Deinococcus deserti.</title>
        <authorList>
            <person name="de Groot A."/>
            <person name="Dulermo R."/>
            <person name="Ortet P."/>
            <person name="Blanchard L."/>
            <person name="Guerin P."/>
            <person name="Fernandez B."/>
            <person name="Vacherie B."/>
            <person name="Dossat C."/>
            <person name="Jolivet E."/>
            <person name="Siguier P."/>
            <person name="Chandler M."/>
            <person name="Barakat M."/>
            <person name="Dedieu A."/>
            <person name="Barbe V."/>
            <person name="Heulin T."/>
            <person name="Sommer S."/>
            <person name="Achouak W."/>
            <person name="Armengaud J."/>
        </authorList>
    </citation>
    <scope>NUCLEOTIDE SEQUENCE [LARGE SCALE GENOMIC DNA]</scope>
    <source>
        <strain>DSM 17065 / CIP 109153 / LMG 22923 / VCD115</strain>
    </source>
</reference>
<keyword id="KW-0227">DNA damage</keyword>
<keyword id="KW-0234">DNA repair</keyword>
<keyword id="KW-0235">DNA replication</keyword>
<keyword id="KW-0436">Ligase</keyword>
<keyword id="KW-0460">Magnesium</keyword>
<keyword id="KW-0464">Manganese</keyword>
<keyword id="KW-0479">Metal-binding</keyword>
<keyword id="KW-0520">NAD</keyword>
<keyword id="KW-1185">Reference proteome</keyword>
<keyword id="KW-0862">Zinc</keyword>
<accession>C1CVC7</accession>
<comment type="function">
    <text evidence="1">DNA ligase that catalyzes the formation of phosphodiester linkages between 5'-phosphoryl and 3'-hydroxyl groups in double-stranded DNA using NAD as a coenzyme and as the energy source for the reaction. It is essential for DNA replication and repair of damaged DNA.</text>
</comment>
<comment type="catalytic activity">
    <reaction evidence="1">
        <text>NAD(+) + (deoxyribonucleotide)n-3'-hydroxyl + 5'-phospho-(deoxyribonucleotide)m = (deoxyribonucleotide)n+m + AMP + beta-nicotinamide D-nucleotide.</text>
        <dbReference type="EC" id="6.5.1.2"/>
    </reaction>
</comment>
<comment type="cofactor">
    <cofactor evidence="1">
        <name>Mg(2+)</name>
        <dbReference type="ChEBI" id="CHEBI:18420"/>
    </cofactor>
    <cofactor evidence="1">
        <name>Mn(2+)</name>
        <dbReference type="ChEBI" id="CHEBI:29035"/>
    </cofactor>
</comment>
<comment type="similarity">
    <text evidence="1">Belongs to the NAD-dependent DNA ligase family. LigA subfamily.</text>
</comment>
<organism>
    <name type="scientific">Deinococcus deserti (strain DSM 17065 / CIP 109153 / LMG 22923 / VCD115)</name>
    <dbReference type="NCBI Taxonomy" id="546414"/>
    <lineage>
        <taxon>Bacteria</taxon>
        <taxon>Thermotogati</taxon>
        <taxon>Deinococcota</taxon>
        <taxon>Deinococci</taxon>
        <taxon>Deinococcales</taxon>
        <taxon>Deinococcaceae</taxon>
        <taxon>Deinococcus</taxon>
    </lineage>
</organism>
<proteinExistence type="inferred from homology"/>
<protein>
    <recommendedName>
        <fullName evidence="1">DNA ligase 2</fullName>
        <ecNumber evidence="1">6.5.1.2</ecNumber>
    </recommendedName>
    <alternativeName>
        <fullName evidence="1">Polydeoxyribonucleotide synthase [NAD(+)] 2</fullName>
    </alternativeName>
</protein>
<evidence type="ECO:0000255" key="1">
    <source>
        <dbReference type="HAMAP-Rule" id="MF_01588"/>
    </source>
</evidence>